<proteinExistence type="evidence at protein level"/>
<dbReference type="EMBL" id="AB010954">
    <property type="protein sequence ID" value="BAA83092.1"/>
    <property type="molecule type" value="mRNA"/>
</dbReference>
<dbReference type="EMBL" id="AF056002">
    <property type="protein sequence ID" value="AAC12781.1"/>
    <property type="molecule type" value="mRNA"/>
</dbReference>
<dbReference type="RefSeq" id="NP_062148.1">
    <property type="nucleotide sequence ID" value="NM_019275.3"/>
</dbReference>
<dbReference type="SMR" id="O70437"/>
<dbReference type="FunCoup" id="O70437">
    <property type="interactions" value="4801"/>
</dbReference>
<dbReference type="IntAct" id="O70437">
    <property type="interactions" value="1"/>
</dbReference>
<dbReference type="MINT" id="O70437"/>
<dbReference type="STRING" id="10116.ENSRNOP00000074882"/>
<dbReference type="iPTMnet" id="O70437"/>
<dbReference type="PhosphoSitePlus" id="O70437"/>
<dbReference type="jPOST" id="O70437"/>
<dbReference type="PaxDb" id="10116-ENSRNOP00000021113"/>
<dbReference type="Ensembl" id="ENSRNOT00000082484.2">
    <property type="protein sequence ID" value="ENSRNOP00000074882.2"/>
    <property type="gene ID" value="ENSRNOG00000051965.2"/>
</dbReference>
<dbReference type="GeneID" id="50554"/>
<dbReference type="KEGG" id="rno:50554"/>
<dbReference type="AGR" id="RGD:3033"/>
<dbReference type="CTD" id="4089"/>
<dbReference type="RGD" id="3033">
    <property type="gene designation" value="Smad4"/>
</dbReference>
<dbReference type="eggNOG" id="KOG3701">
    <property type="taxonomic scope" value="Eukaryota"/>
</dbReference>
<dbReference type="GeneTree" id="ENSGT00940000157435"/>
<dbReference type="InParanoid" id="O70437"/>
<dbReference type="OMA" id="CWIEVQI"/>
<dbReference type="OrthoDB" id="5875866at2759"/>
<dbReference type="PhylomeDB" id="O70437"/>
<dbReference type="Reactome" id="R-RNO-1181150">
    <property type="pathway name" value="Signaling by NODAL"/>
</dbReference>
<dbReference type="Reactome" id="R-RNO-1502540">
    <property type="pathway name" value="Signaling by Activin"/>
</dbReference>
<dbReference type="Reactome" id="R-RNO-201451">
    <property type="pathway name" value="Signaling by BMP"/>
</dbReference>
<dbReference type="Reactome" id="R-RNO-2173789">
    <property type="pathway name" value="TGF-beta receptor signaling activates SMADs"/>
</dbReference>
<dbReference type="Reactome" id="R-RNO-2173795">
    <property type="pathway name" value="Downregulation of SMAD2/3:SMAD4 transcriptional activity"/>
</dbReference>
<dbReference type="Reactome" id="R-RNO-2173796">
    <property type="pathway name" value="SMAD2/SMAD3:SMAD4 heterotrimer regulates transcription"/>
</dbReference>
<dbReference type="Reactome" id="R-RNO-8941855">
    <property type="pathway name" value="RUNX3 regulates CDKN1A transcription"/>
</dbReference>
<dbReference type="Reactome" id="R-RNO-9617828">
    <property type="pathway name" value="FOXO-mediated transcription of cell cycle genes"/>
</dbReference>
<dbReference type="PRO" id="PR:O70437"/>
<dbReference type="Proteomes" id="UP000002494">
    <property type="component" value="Chromosome 18"/>
</dbReference>
<dbReference type="GO" id="GO:0032444">
    <property type="term" value="C:activin responsive factor complex"/>
    <property type="evidence" value="ECO:0000266"/>
    <property type="project" value="RGD"/>
</dbReference>
<dbReference type="GO" id="GO:0005813">
    <property type="term" value="C:centrosome"/>
    <property type="evidence" value="ECO:0007669"/>
    <property type="project" value="Ensembl"/>
</dbReference>
<dbReference type="GO" id="GO:0000785">
    <property type="term" value="C:chromatin"/>
    <property type="evidence" value="ECO:0000266"/>
    <property type="project" value="RGD"/>
</dbReference>
<dbReference type="GO" id="GO:0036064">
    <property type="term" value="C:ciliary basal body"/>
    <property type="evidence" value="ECO:0007669"/>
    <property type="project" value="Ensembl"/>
</dbReference>
<dbReference type="GO" id="GO:0005737">
    <property type="term" value="C:cytoplasm"/>
    <property type="evidence" value="ECO:0000266"/>
    <property type="project" value="RGD"/>
</dbReference>
<dbReference type="GO" id="GO:0005829">
    <property type="term" value="C:cytosol"/>
    <property type="evidence" value="ECO:0007669"/>
    <property type="project" value="Ensembl"/>
</dbReference>
<dbReference type="GO" id="GO:0071144">
    <property type="term" value="C:heteromeric SMAD protein complex"/>
    <property type="evidence" value="ECO:0000266"/>
    <property type="project" value="RGD"/>
</dbReference>
<dbReference type="GO" id="GO:0005654">
    <property type="term" value="C:nucleoplasm"/>
    <property type="evidence" value="ECO:0007669"/>
    <property type="project" value="Ensembl"/>
</dbReference>
<dbReference type="GO" id="GO:0005634">
    <property type="term" value="C:nucleus"/>
    <property type="evidence" value="ECO:0000266"/>
    <property type="project" value="RGD"/>
</dbReference>
<dbReference type="GO" id="GO:0032991">
    <property type="term" value="C:protein-containing complex"/>
    <property type="evidence" value="ECO:0000314"/>
    <property type="project" value="RGD"/>
</dbReference>
<dbReference type="GO" id="GO:0090575">
    <property type="term" value="C:RNA polymerase II transcription regulator complex"/>
    <property type="evidence" value="ECO:0000266"/>
    <property type="project" value="RGD"/>
</dbReference>
<dbReference type="GO" id="GO:0071141">
    <property type="term" value="C:SMAD protein complex"/>
    <property type="evidence" value="ECO:0000266"/>
    <property type="project" value="RGD"/>
</dbReference>
<dbReference type="GO" id="GO:0005667">
    <property type="term" value="C:transcription regulator complex"/>
    <property type="evidence" value="ECO:0000266"/>
    <property type="project" value="RGD"/>
</dbReference>
<dbReference type="GO" id="GO:0003682">
    <property type="term" value="F:chromatin binding"/>
    <property type="evidence" value="ECO:0000266"/>
    <property type="project" value="RGD"/>
</dbReference>
<dbReference type="GO" id="GO:0005518">
    <property type="term" value="F:collagen binding"/>
    <property type="evidence" value="ECO:0000266"/>
    <property type="project" value="RGD"/>
</dbReference>
<dbReference type="GO" id="GO:0003677">
    <property type="term" value="F:DNA binding"/>
    <property type="evidence" value="ECO:0000314"/>
    <property type="project" value="RGD"/>
</dbReference>
<dbReference type="GO" id="GO:0001228">
    <property type="term" value="F:DNA-binding transcription activator activity, RNA polymerase II-specific"/>
    <property type="evidence" value="ECO:0000266"/>
    <property type="project" value="RGD"/>
</dbReference>
<dbReference type="GO" id="GO:0003700">
    <property type="term" value="F:DNA-binding transcription factor activity"/>
    <property type="evidence" value="ECO:0000266"/>
    <property type="project" value="RGD"/>
</dbReference>
<dbReference type="GO" id="GO:0000981">
    <property type="term" value="F:DNA-binding transcription factor activity, RNA polymerase II-specific"/>
    <property type="evidence" value="ECO:0000318"/>
    <property type="project" value="GO_Central"/>
</dbReference>
<dbReference type="GO" id="GO:0031005">
    <property type="term" value="F:filamin binding"/>
    <property type="evidence" value="ECO:0000353"/>
    <property type="project" value="RGD"/>
</dbReference>
<dbReference type="GO" id="GO:0070411">
    <property type="term" value="F:I-SMAD binding"/>
    <property type="evidence" value="ECO:0000266"/>
    <property type="project" value="RGD"/>
</dbReference>
<dbReference type="GO" id="GO:0042802">
    <property type="term" value="F:identical protein binding"/>
    <property type="evidence" value="ECO:0000266"/>
    <property type="project" value="RGD"/>
</dbReference>
<dbReference type="GO" id="GO:0046872">
    <property type="term" value="F:metal ion binding"/>
    <property type="evidence" value="ECO:0007669"/>
    <property type="project" value="UniProtKB-KW"/>
</dbReference>
<dbReference type="GO" id="GO:0042803">
    <property type="term" value="F:protein homodimerization activity"/>
    <property type="evidence" value="ECO:0000266"/>
    <property type="project" value="RGD"/>
</dbReference>
<dbReference type="GO" id="GO:0044877">
    <property type="term" value="F:protein-containing complex binding"/>
    <property type="evidence" value="ECO:0000353"/>
    <property type="project" value="RGD"/>
</dbReference>
<dbReference type="GO" id="GO:0070412">
    <property type="term" value="F:R-SMAD binding"/>
    <property type="evidence" value="ECO:0000266"/>
    <property type="project" value="RGD"/>
</dbReference>
<dbReference type="GO" id="GO:0000978">
    <property type="term" value="F:RNA polymerase II cis-regulatory region sequence-specific DNA binding"/>
    <property type="evidence" value="ECO:0000266"/>
    <property type="project" value="RGD"/>
</dbReference>
<dbReference type="GO" id="GO:0000977">
    <property type="term" value="F:RNA polymerase II transcription regulatory region sequence-specific DNA binding"/>
    <property type="evidence" value="ECO:0000266"/>
    <property type="project" value="RGD"/>
</dbReference>
<dbReference type="GO" id="GO:0061629">
    <property type="term" value="F:RNA polymerase II-specific DNA-binding transcription factor binding"/>
    <property type="evidence" value="ECO:0000266"/>
    <property type="project" value="RGD"/>
</dbReference>
<dbReference type="GO" id="GO:0043565">
    <property type="term" value="F:sequence-specific DNA binding"/>
    <property type="evidence" value="ECO:0000266"/>
    <property type="project" value="RGD"/>
</dbReference>
<dbReference type="GO" id="GO:0046332">
    <property type="term" value="F:SMAD binding"/>
    <property type="evidence" value="ECO:0000353"/>
    <property type="project" value="RGD"/>
</dbReference>
<dbReference type="GO" id="GO:0043199">
    <property type="term" value="F:sulfate binding"/>
    <property type="evidence" value="ECO:0000266"/>
    <property type="project" value="RGD"/>
</dbReference>
<dbReference type="GO" id="GO:0000976">
    <property type="term" value="F:transcription cis-regulatory region binding"/>
    <property type="evidence" value="ECO:0000266"/>
    <property type="project" value="RGD"/>
</dbReference>
<dbReference type="GO" id="GO:0001223">
    <property type="term" value="F:transcription coactivator binding"/>
    <property type="evidence" value="ECO:0000266"/>
    <property type="project" value="RGD"/>
</dbReference>
<dbReference type="GO" id="GO:0001222">
    <property type="term" value="F:transcription corepressor binding"/>
    <property type="evidence" value="ECO:0000266"/>
    <property type="project" value="RGD"/>
</dbReference>
<dbReference type="GO" id="GO:0030325">
    <property type="term" value="P:adrenal gland development"/>
    <property type="evidence" value="ECO:0000270"/>
    <property type="project" value="RGD"/>
</dbReference>
<dbReference type="GO" id="GO:0009653">
    <property type="term" value="P:anatomical structure morphogenesis"/>
    <property type="evidence" value="ECO:0000266"/>
    <property type="project" value="RGD"/>
</dbReference>
<dbReference type="GO" id="GO:0009952">
    <property type="term" value="P:anterior/posterior pattern specification"/>
    <property type="evidence" value="ECO:0000266"/>
    <property type="project" value="RGD"/>
</dbReference>
<dbReference type="GO" id="GO:0036302">
    <property type="term" value="P:atrioventricular canal development"/>
    <property type="evidence" value="ECO:0000266"/>
    <property type="project" value="RGD"/>
</dbReference>
<dbReference type="GO" id="GO:0003190">
    <property type="term" value="P:atrioventricular valve formation"/>
    <property type="evidence" value="ECO:0000266"/>
    <property type="project" value="RGD"/>
</dbReference>
<dbReference type="GO" id="GO:0007411">
    <property type="term" value="P:axon guidance"/>
    <property type="evidence" value="ECO:0000266"/>
    <property type="project" value="RGD"/>
</dbReference>
<dbReference type="GO" id="GO:0030509">
    <property type="term" value="P:BMP signaling pathway"/>
    <property type="evidence" value="ECO:0000266"/>
    <property type="project" value="RGD"/>
</dbReference>
<dbReference type="GO" id="GO:0003360">
    <property type="term" value="P:brainstem development"/>
    <property type="evidence" value="ECO:0000266"/>
    <property type="project" value="RGD"/>
</dbReference>
<dbReference type="GO" id="GO:0001658">
    <property type="term" value="P:branching involved in ureteric bud morphogenesis"/>
    <property type="evidence" value="ECO:0000266"/>
    <property type="project" value="RGD"/>
</dbReference>
<dbReference type="GO" id="GO:0014898">
    <property type="term" value="P:cardiac muscle hypertrophy in response to stress"/>
    <property type="evidence" value="ECO:0000315"/>
    <property type="project" value="RGD"/>
</dbReference>
<dbReference type="GO" id="GO:0003279">
    <property type="term" value="P:cardiac septum development"/>
    <property type="evidence" value="ECO:0000266"/>
    <property type="project" value="RGD"/>
</dbReference>
<dbReference type="GO" id="GO:0030154">
    <property type="term" value="P:cell differentiation"/>
    <property type="evidence" value="ECO:0000266"/>
    <property type="project" value="RGD"/>
</dbReference>
<dbReference type="GO" id="GO:0008283">
    <property type="term" value="P:cell population proliferation"/>
    <property type="evidence" value="ECO:0000266"/>
    <property type="project" value="RGD"/>
</dbReference>
<dbReference type="GO" id="GO:0071333">
    <property type="term" value="P:cellular response to glucose stimulus"/>
    <property type="evidence" value="ECO:0000314"/>
    <property type="project" value="RGD"/>
</dbReference>
<dbReference type="GO" id="GO:0071560">
    <property type="term" value="P:cellular response to transforming growth factor beta stimulus"/>
    <property type="evidence" value="ECO:0000266"/>
    <property type="project" value="RGD"/>
</dbReference>
<dbReference type="GO" id="GO:0048589">
    <property type="term" value="P:developmental growth"/>
    <property type="evidence" value="ECO:0000266"/>
    <property type="project" value="RGD"/>
</dbReference>
<dbReference type="GO" id="GO:0006351">
    <property type="term" value="P:DNA-templated transcription"/>
    <property type="evidence" value="ECO:0000266"/>
    <property type="project" value="RGD"/>
</dbReference>
<dbReference type="GO" id="GO:0042733">
    <property type="term" value="P:embryonic digit morphogenesis"/>
    <property type="evidence" value="ECO:0000266"/>
    <property type="project" value="RGD"/>
</dbReference>
<dbReference type="GO" id="GO:0060956">
    <property type="term" value="P:endocardial cell differentiation"/>
    <property type="evidence" value="ECO:0000266"/>
    <property type="project" value="RGD"/>
</dbReference>
<dbReference type="GO" id="GO:0007492">
    <property type="term" value="P:endoderm development"/>
    <property type="evidence" value="ECO:0000266"/>
    <property type="project" value="RGD"/>
</dbReference>
<dbReference type="GO" id="GO:0042118">
    <property type="term" value="P:endothelial cell activation"/>
    <property type="evidence" value="ECO:0000266"/>
    <property type="project" value="RGD"/>
</dbReference>
<dbReference type="GO" id="GO:0010631">
    <property type="term" value="P:epithelial cell migration"/>
    <property type="evidence" value="ECO:0000266"/>
    <property type="project" value="RGD"/>
</dbReference>
<dbReference type="GO" id="GO:0001837">
    <property type="term" value="P:epithelial to mesenchymal transition"/>
    <property type="evidence" value="ECO:0000266"/>
    <property type="project" value="RGD"/>
</dbReference>
<dbReference type="GO" id="GO:0003198">
    <property type="term" value="P:epithelial to mesenchymal transition involved in endocardial cushion formation"/>
    <property type="evidence" value="ECO:0000266"/>
    <property type="project" value="RGD"/>
</dbReference>
<dbReference type="GO" id="GO:0070371">
    <property type="term" value="P:ERK1 and ERK2 cascade"/>
    <property type="evidence" value="ECO:0000315"/>
    <property type="project" value="RGD"/>
</dbReference>
<dbReference type="GO" id="GO:0097191">
    <property type="term" value="P:extrinsic apoptotic signaling pathway"/>
    <property type="evidence" value="ECO:0000266"/>
    <property type="project" value="RGD"/>
</dbReference>
<dbReference type="GO" id="GO:0008585">
    <property type="term" value="P:female gonad development"/>
    <property type="evidence" value="ECO:0000266"/>
    <property type="project" value="RGD"/>
</dbReference>
<dbReference type="GO" id="GO:0061040">
    <property type="term" value="P:female gonad morphogenesis"/>
    <property type="evidence" value="ECO:0000266"/>
    <property type="project" value="RGD"/>
</dbReference>
<dbReference type="GO" id="GO:0048859">
    <property type="term" value="P:formation of anatomical boundary"/>
    <property type="evidence" value="ECO:0000266"/>
    <property type="project" value="RGD"/>
</dbReference>
<dbReference type="GO" id="GO:0007369">
    <property type="term" value="P:gastrulation"/>
    <property type="evidence" value="ECO:0000266"/>
    <property type="project" value="RGD"/>
</dbReference>
<dbReference type="GO" id="GO:0001702">
    <property type="term" value="P:gastrulation with mouth forming second"/>
    <property type="evidence" value="ECO:0000266"/>
    <property type="project" value="RGD"/>
</dbReference>
<dbReference type="GO" id="GO:0001701">
    <property type="term" value="P:in utero embryonic development"/>
    <property type="evidence" value="ECO:0000266"/>
    <property type="project" value="RGD"/>
</dbReference>
<dbReference type="GO" id="GO:0070102">
    <property type="term" value="P:interleukin-6-mediated signaling pathway"/>
    <property type="evidence" value="ECO:0000266"/>
    <property type="project" value="RGD"/>
</dbReference>
<dbReference type="GO" id="GO:0006879">
    <property type="term" value="P:intracellular iron ion homeostasis"/>
    <property type="evidence" value="ECO:0000266"/>
    <property type="project" value="RGD"/>
</dbReference>
<dbReference type="GO" id="GO:0035556">
    <property type="term" value="P:intracellular signal transduction"/>
    <property type="evidence" value="ECO:0000266"/>
    <property type="project" value="RGD"/>
</dbReference>
<dbReference type="GO" id="GO:0001822">
    <property type="term" value="P:kidney development"/>
    <property type="evidence" value="ECO:0000266"/>
    <property type="project" value="RGD"/>
</dbReference>
<dbReference type="GO" id="GO:0003220">
    <property type="term" value="P:left ventricular cardiac muscle tissue morphogenesis"/>
    <property type="evidence" value="ECO:0000266"/>
    <property type="project" value="RGD"/>
</dbReference>
<dbReference type="GO" id="GO:0008584">
    <property type="term" value="P:male gonad development"/>
    <property type="evidence" value="ECO:0000266"/>
    <property type="project" value="RGD"/>
</dbReference>
<dbReference type="GO" id="GO:0048382">
    <property type="term" value="P:mesendoderm development"/>
    <property type="evidence" value="ECO:0000266"/>
    <property type="project" value="RGD"/>
</dbReference>
<dbReference type="GO" id="GO:0007498">
    <property type="term" value="P:mesoderm development"/>
    <property type="evidence" value="ECO:0000266"/>
    <property type="project" value="RGD"/>
</dbReference>
<dbReference type="GO" id="GO:0072133">
    <property type="term" value="P:metanephric mesenchyme morphogenesis"/>
    <property type="evidence" value="ECO:0000266"/>
    <property type="project" value="RGD"/>
</dbReference>
<dbReference type="GO" id="GO:0090090">
    <property type="term" value="P:negative regulation of canonical Wnt signaling pathway"/>
    <property type="evidence" value="ECO:0000266"/>
    <property type="project" value="RGD"/>
</dbReference>
<dbReference type="GO" id="GO:0010614">
    <property type="term" value="P:negative regulation of cardiac muscle hypertrophy"/>
    <property type="evidence" value="ECO:0000266"/>
    <property type="project" value="RGD"/>
</dbReference>
<dbReference type="GO" id="GO:1905305">
    <property type="term" value="P:negative regulation of cardiac myofibril assembly"/>
    <property type="evidence" value="ECO:0000266"/>
    <property type="project" value="RGD"/>
</dbReference>
<dbReference type="GO" id="GO:0030308">
    <property type="term" value="P:negative regulation of cell growth"/>
    <property type="evidence" value="ECO:0000266"/>
    <property type="project" value="RGD"/>
</dbReference>
<dbReference type="GO" id="GO:0008285">
    <property type="term" value="P:negative regulation of cell population proliferation"/>
    <property type="evidence" value="ECO:0000266"/>
    <property type="project" value="RGD"/>
</dbReference>
<dbReference type="GO" id="GO:0045892">
    <property type="term" value="P:negative regulation of DNA-templated transcription"/>
    <property type="evidence" value="ECO:0000266"/>
    <property type="project" value="RGD"/>
</dbReference>
<dbReference type="GO" id="GO:0070373">
    <property type="term" value="P:negative regulation of ERK1 and ERK2 cascade"/>
    <property type="evidence" value="ECO:0000266"/>
    <property type="project" value="RGD"/>
</dbReference>
<dbReference type="GO" id="GO:0042177">
    <property type="term" value="P:negative regulation of protein catabolic process"/>
    <property type="evidence" value="ECO:0000315"/>
    <property type="project" value="BHF-UCL"/>
</dbReference>
<dbReference type="GO" id="GO:0000122">
    <property type="term" value="P:negative regulation of transcription by RNA polymerase II"/>
    <property type="evidence" value="ECO:0000266"/>
    <property type="project" value="RGD"/>
</dbReference>
<dbReference type="GO" id="GO:0072134">
    <property type="term" value="P:nephrogenic mesenchyme morphogenesis"/>
    <property type="evidence" value="ECO:0000266"/>
    <property type="project" value="RGD"/>
</dbReference>
<dbReference type="GO" id="GO:0014033">
    <property type="term" value="P:neural crest cell differentiation"/>
    <property type="evidence" value="ECO:0000266"/>
    <property type="project" value="RGD"/>
</dbReference>
<dbReference type="GO" id="GO:0048663">
    <property type="term" value="P:neuron fate commitment"/>
    <property type="evidence" value="ECO:0000266"/>
    <property type="project" value="RGD"/>
</dbReference>
<dbReference type="GO" id="GO:0048665">
    <property type="term" value="P:neuron fate specification"/>
    <property type="evidence" value="ECO:0000266"/>
    <property type="project" value="RGD"/>
</dbReference>
<dbReference type="GO" id="GO:0001649">
    <property type="term" value="P:osteoblast differentiation"/>
    <property type="evidence" value="ECO:0000315"/>
    <property type="project" value="RGD"/>
</dbReference>
<dbReference type="GO" id="GO:0003148">
    <property type="term" value="P:outflow tract septum morphogenesis"/>
    <property type="evidence" value="ECO:0000266"/>
    <property type="project" value="RGD"/>
</dbReference>
<dbReference type="GO" id="GO:0001541">
    <property type="term" value="P:ovarian follicle development"/>
    <property type="evidence" value="ECO:0000270"/>
    <property type="project" value="RGD"/>
</dbReference>
<dbReference type="GO" id="GO:0010666">
    <property type="term" value="P:positive regulation of cardiac muscle cell apoptotic process"/>
    <property type="evidence" value="ECO:0000315"/>
    <property type="project" value="RGD"/>
</dbReference>
<dbReference type="GO" id="GO:0003251">
    <property type="term" value="P:positive regulation of cell proliferation involved in heart valve morphogenesis"/>
    <property type="evidence" value="ECO:0000266"/>
    <property type="project" value="RGD"/>
</dbReference>
<dbReference type="GO" id="GO:0045893">
    <property type="term" value="P:positive regulation of DNA-templated transcription"/>
    <property type="evidence" value="ECO:0000266"/>
    <property type="project" value="RGD"/>
</dbReference>
<dbReference type="GO" id="GO:0010718">
    <property type="term" value="P:positive regulation of epithelial to mesenchymal transition"/>
    <property type="evidence" value="ECO:0000266"/>
    <property type="project" value="RGD"/>
</dbReference>
<dbReference type="GO" id="GO:1901203">
    <property type="term" value="P:positive regulation of extracellular matrix assembly"/>
    <property type="evidence" value="ECO:0000266"/>
    <property type="project" value="RGD"/>
</dbReference>
<dbReference type="GO" id="GO:0046881">
    <property type="term" value="P:positive regulation of follicle-stimulating hormone secretion"/>
    <property type="evidence" value="ECO:0000266"/>
    <property type="project" value="RGD"/>
</dbReference>
<dbReference type="GO" id="GO:0010628">
    <property type="term" value="P:positive regulation of gene expression"/>
    <property type="evidence" value="ECO:0000266"/>
    <property type="project" value="RGD"/>
</dbReference>
<dbReference type="GO" id="GO:0033686">
    <property type="term" value="P:positive regulation of luteinizing hormone secretion"/>
    <property type="evidence" value="ECO:0000266"/>
    <property type="project" value="RGD"/>
</dbReference>
<dbReference type="GO" id="GO:1902895">
    <property type="term" value="P:positive regulation of miRNA transcription"/>
    <property type="evidence" value="ECO:0000266"/>
    <property type="project" value="RGD"/>
</dbReference>
<dbReference type="GO" id="GO:0060391">
    <property type="term" value="P:positive regulation of SMAD protein signal transduction"/>
    <property type="evidence" value="ECO:0000266"/>
    <property type="project" value="RGD"/>
</dbReference>
<dbReference type="GO" id="GO:0045944">
    <property type="term" value="P:positive regulation of transcription by RNA polymerase II"/>
    <property type="evidence" value="ECO:0000266"/>
    <property type="project" value="RGD"/>
</dbReference>
<dbReference type="GO" id="GO:0030511">
    <property type="term" value="P:positive regulation of transforming growth factor beta receptor signaling pathway"/>
    <property type="evidence" value="ECO:0000266"/>
    <property type="project" value="RGD"/>
</dbReference>
<dbReference type="GO" id="GO:0042127">
    <property type="term" value="P:regulation of cell population proliferation"/>
    <property type="evidence" value="ECO:0000266"/>
    <property type="project" value="RGD"/>
</dbReference>
<dbReference type="GO" id="GO:0051797">
    <property type="term" value="P:regulation of hair follicle development"/>
    <property type="evidence" value="ECO:0000266"/>
    <property type="project" value="RGD"/>
</dbReference>
<dbReference type="GO" id="GO:0006357">
    <property type="term" value="P:regulation of transcription by RNA polymerase II"/>
    <property type="evidence" value="ECO:0000266"/>
    <property type="project" value="RGD"/>
</dbReference>
<dbReference type="GO" id="GO:0032909">
    <property type="term" value="P:regulation of transforming growth factor beta2 production"/>
    <property type="evidence" value="ECO:0000266"/>
    <property type="project" value="RGD"/>
</dbReference>
<dbReference type="GO" id="GO:0001666">
    <property type="term" value="P:response to hypoxia"/>
    <property type="evidence" value="ECO:0000266"/>
    <property type="project" value="RGD"/>
</dbReference>
<dbReference type="GO" id="GO:0071559">
    <property type="term" value="P:response to transforming growth factor beta"/>
    <property type="evidence" value="ECO:0000266"/>
    <property type="project" value="RGD"/>
</dbReference>
<dbReference type="GO" id="GO:0048733">
    <property type="term" value="P:sebaceous gland development"/>
    <property type="evidence" value="ECO:0000266"/>
    <property type="project" value="RGD"/>
</dbReference>
<dbReference type="GO" id="GO:0062009">
    <property type="term" value="P:secondary palate development"/>
    <property type="evidence" value="ECO:0000266"/>
    <property type="project" value="RGD"/>
</dbReference>
<dbReference type="GO" id="GO:0072520">
    <property type="term" value="P:seminiferous tubule development"/>
    <property type="evidence" value="ECO:0000266"/>
    <property type="project" value="RGD"/>
</dbReference>
<dbReference type="GO" id="GO:0007338">
    <property type="term" value="P:single fertilization"/>
    <property type="evidence" value="ECO:0000266"/>
    <property type="project" value="RGD"/>
</dbReference>
<dbReference type="GO" id="GO:0060395">
    <property type="term" value="P:SMAD protein signal transduction"/>
    <property type="evidence" value="ECO:0000266"/>
    <property type="project" value="RGD"/>
</dbReference>
<dbReference type="GO" id="GO:0032525">
    <property type="term" value="P:somite rostral/caudal axis specification"/>
    <property type="evidence" value="ECO:0000266"/>
    <property type="project" value="RGD"/>
</dbReference>
<dbReference type="GO" id="GO:0007283">
    <property type="term" value="P:spermatogenesis"/>
    <property type="evidence" value="ECO:0000266"/>
    <property type="project" value="RGD"/>
</dbReference>
<dbReference type="GO" id="GO:0048729">
    <property type="term" value="P:tissue morphogenesis"/>
    <property type="evidence" value="ECO:0000266"/>
    <property type="project" value="RGD"/>
</dbReference>
<dbReference type="GO" id="GO:0006366">
    <property type="term" value="P:transcription by RNA polymerase II"/>
    <property type="evidence" value="ECO:0000266"/>
    <property type="project" value="RGD"/>
</dbReference>
<dbReference type="GO" id="GO:0007179">
    <property type="term" value="P:transforming growth factor beta receptor signaling pathway"/>
    <property type="evidence" value="ECO:0000266"/>
    <property type="project" value="RGD"/>
</dbReference>
<dbReference type="GO" id="GO:0060065">
    <property type="term" value="P:uterus development"/>
    <property type="evidence" value="ECO:0000266"/>
    <property type="project" value="RGD"/>
</dbReference>
<dbReference type="GO" id="GO:0060412">
    <property type="term" value="P:ventricular septum morphogenesis"/>
    <property type="evidence" value="ECO:0000266"/>
    <property type="project" value="RGD"/>
</dbReference>
<dbReference type="CDD" id="cd10492">
    <property type="entry name" value="MH1_SMAD_4"/>
    <property type="match status" value="1"/>
</dbReference>
<dbReference type="CDD" id="cd10498">
    <property type="entry name" value="MH2_SMAD_4"/>
    <property type="match status" value="1"/>
</dbReference>
<dbReference type="FunFam" id="2.60.200.10:FF:000002">
    <property type="entry name" value="Mothers against decapentaplegic homolog"/>
    <property type="match status" value="1"/>
</dbReference>
<dbReference type="FunFam" id="3.90.520.10:FF:000002">
    <property type="entry name" value="Mothers against decapentaplegic homolog"/>
    <property type="match status" value="1"/>
</dbReference>
<dbReference type="Gene3D" id="2.60.200.10">
    <property type="match status" value="1"/>
</dbReference>
<dbReference type="Gene3D" id="3.90.520.10">
    <property type="entry name" value="SMAD MH1 domain"/>
    <property type="match status" value="1"/>
</dbReference>
<dbReference type="InterPro" id="IPR013790">
    <property type="entry name" value="Dwarfin"/>
</dbReference>
<dbReference type="InterPro" id="IPR003619">
    <property type="entry name" value="MAD_homology1_Dwarfin-type"/>
</dbReference>
<dbReference type="InterPro" id="IPR013019">
    <property type="entry name" value="MAD_homology_MH1"/>
</dbReference>
<dbReference type="InterPro" id="IPR017855">
    <property type="entry name" value="SMAD-like_dom_sf"/>
</dbReference>
<dbReference type="InterPro" id="IPR001132">
    <property type="entry name" value="SMAD_dom_Dwarfin-type"/>
</dbReference>
<dbReference type="InterPro" id="IPR008984">
    <property type="entry name" value="SMAD_FHA_dom_sf"/>
</dbReference>
<dbReference type="InterPro" id="IPR036578">
    <property type="entry name" value="SMAD_MH1_sf"/>
</dbReference>
<dbReference type="PANTHER" id="PTHR13703:SF63">
    <property type="entry name" value="MOTHERS AGAINST DECAPENTAPLEGIC HOMOLOG 4"/>
    <property type="match status" value="1"/>
</dbReference>
<dbReference type="PANTHER" id="PTHR13703">
    <property type="entry name" value="SMAD"/>
    <property type="match status" value="1"/>
</dbReference>
<dbReference type="Pfam" id="PF03165">
    <property type="entry name" value="MH1"/>
    <property type="match status" value="1"/>
</dbReference>
<dbReference type="Pfam" id="PF03166">
    <property type="entry name" value="MH2"/>
    <property type="match status" value="1"/>
</dbReference>
<dbReference type="SMART" id="SM00523">
    <property type="entry name" value="DWA"/>
    <property type="match status" value="1"/>
</dbReference>
<dbReference type="SMART" id="SM00524">
    <property type="entry name" value="DWB"/>
    <property type="match status" value="1"/>
</dbReference>
<dbReference type="SUPFAM" id="SSF56366">
    <property type="entry name" value="SMAD MH1 domain"/>
    <property type="match status" value="1"/>
</dbReference>
<dbReference type="SUPFAM" id="SSF49879">
    <property type="entry name" value="SMAD/FHA domain"/>
    <property type="match status" value="1"/>
</dbReference>
<dbReference type="PROSITE" id="PS51075">
    <property type="entry name" value="MH1"/>
    <property type="match status" value="1"/>
</dbReference>
<dbReference type="PROSITE" id="PS51076">
    <property type="entry name" value="MH2"/>
    <property type="match status" value="1"/>
</dbReference>
<accession>O70437</accession>
<keyword id="KW-0007">Acetylation</keyword>
<keyword id="KW-0963">Cytoplasm</keyword>
<keyword id="KW-0238">DNA-binding</keyword>
<keyword id="KW-1017">Isopeptide bond</keyword>
<keyword id="KW-0479">Metal-binding</keyword>
<keyword id="KW-0539">Nucleus</keyword>
<keyword id="KW-1185">Reference proteome</keyword>
<keyword id="KW-0804">Transcription</keyword>
<keyword id="KW-0805">Transcription regulation</keyword>
<keyword id="KW-0832">Ubl conjugation</keyword>
<keyword id="KW-0862">Zinc</keyword>
<gene>
    <name type="primary">Smad4</name>
    <name type="synonym">Madh4</name>
</gene>
<sequence>MDNMSITNTPTSNDACLSIVHSLMCHRQGGESETFAKRAIESLVKKLKEKKDELDSLITAITTNGAHPSKCVTIQRTLDGRLQVAGRKGFPHVIYARLWRWPDLHKNELKHVKYCQYAFDLKCDSVCVNPYHYERVVSPGIDLSGLTLQSNAPPSMLVKDEYVHDFEGQPSLPTEGHSIQTIQHPPSNRASTETYSAPALLAPSESNATSTTNFPNIPVASTSQPASILAGSHSEGLLQIASGPQPGQQQNGFTAQPATYHHNSTTTWTGSRTAPYTPNLPHHQNGHLQHHPPMPPHPGHYWPVHNELAFQPPISNHPAPEYWCSIAYFEMDVQVGETFKVPSSCPIVTVDGYVDPSGGDRFCLGQLSNVHRTEAIERARLHIGKGVQLECKGEGDVWVRCLSDHAVFVQSYYLDREAGRAPGDAVHKIYPSAYIKVFDLRQCHRQMQQQAATAQAAAAAQAAAVAGNIPGPGSVGGIAPAISLSAAAGIGVDDLRRLCILRMSFVKGWGPDYPRQSIKETPCWIEIHLHRALQLLDEVLHTMPIADPQPLD</sequence>
<feature type="chain" id="PRO_0000090864" description="Mothers against decapentaplegic homolog 4">
    <location>
        <begin position="1"/>
        <end position="552"/>
    </location>
</feature>
<feature type="domain" description="MH1" evidence="4">
    <location>
        <begin position="18"/>
        <end position="142"/>
    </location>
</feature>
<feature type="domain" description="MH2" evidence="5">
    <location>
        <begin position="323"/>
        <end position="552"/>
    </location>
</feature>
<feature type="region of interest" description="Mediates interaction with ZBTB7A" evidence="3">
    <location>
        <begin position="1"/>
        <end position="322"/>
    </location>
</feature>
<feature type="region of interest" description="Required for interaction with TSC22D1" evidence="3">
    <location>
        <begin position="44"/>
        <end position="69"/>
    </location>
</feature>
<feature type="region of interest" description="Disordered" evidence="6">
    <location>
        <begin position="167"/>
        <end position="193"/>
    </location>
</feature>
<feature type="region of interest" description="SAD">
    <location>
        <begin position="275"/>
        <end position="320"/>
    </location>
</feature>
<feature type="compositionally biased region" description="Polar residues" evidence="6">
    <location>
        <begin position="177"/>
        <end position="193"/>
    </location>
</feature>
<feature type="binding site" evidence="1">
    <location>
        <position position="71"/>
    </location>
    <ligand>
        <name>Zn(2+)</name>
        <dbReference type="ChEBI" id="CHEBI:29105"/>
    </ligand>
</feature>
<feature type="binding site" evidence="1">
    <location>
        <position position="115"/>
    </location>
    <ligand>
        <name>Zn(2+)</name>
        <dbReference type="ChEBI" id="CHEBI:29105"/>
    </ligand>
</feature>
<feature type="binding site" evidence="1">
    <location>
        <position position="127"/>
    </location>
    <ligand>
        <name>Zn(2+)</name>
        <dbReference type="ChEBI" id="CHEBI:29105"/>
    </ligand>
</feature>
<feature type="binding site" evidence="1">
    <location>
        <position position="132"/>
    </location>
    <ligand>
        <name>Zn(2+)</name>
        <dbReference type="ChEBI" id="CHEBI:29105"/>
    </ligand>
</feature>
<feature type="site" description="Necessary for heterotrimerization" evidence="1">
    <location>
        <position position="515"/>
    </location>
</feature>
<feature type="modified residue" description="N6-acetyllysine" evidence="3">
    <location>
        <position position="37"/>
    </location>
</feature>
<feature type="modified residue" description="N6-acetyllysine" evidence="3">
    <location>
        <position position="428"/>
    </location>
</feature>
<feature type="modified residue" description="N6-acetyllysine" evidence="3">
    <location>
        <position position="507"/>
    </location>
</feature>
<feature type="cross-link" description="Glycyl lysine isopeptide (Lys-Gly) (interchain with G-Cter in SUMO2)" evidence="3">
    <location>
        <position position="113"/>
    </location>
</feature>
<feature type="cross-link" description="Glycyl lysine isopeptide (Lys-Gly) (interchain with G-Cter in ubiquitin)" evidence="3">
    <location>
        <position position="519"/>
    </location>
</feature>
<evidence type="ECO:0000250" key="1"/>
<evidence type="ECO:0000250" key="2">
    <source>
        <dbReference type="UniProtKB" id="P97471"/>
    </source>
</evidence>
<evidence type="ECO:0000250" key="3">
    <source>
        <dbReference type="UniProtKB" id="Q13485"/>
    </source>
</evidence>
<evidence type="ECO:0000255" key="4">
    <source>
        <dbReference type="PROSITE-ProRule" id="PRU00438"/>
    </source>
</evidence>
<evidence type="ECO:0000255" key="5">
    <source>
        <dbReference type="PROSITE-ProRule" id="PRU00439"/>
    </source>
</evidence>
<evidence type="ECO:0000256" key="6">
    <source>
        <dbReference type="SAM" id="MobiDB-lite"/>
    </source>
</evidence>
<evidence type="ECO:0000269" key="7">
    <source>
    </source>
</evidence>
<evidence type="ECO:0000305" key="8"/>
<reference key="1">
    <citation type="submission" date="1998-02" db="EMBL/GenBank/DDBJ databases">
        <title>Molecular cloning of rat Smad4 gene.</title>
        <authorList>
            <person name="Miyakita A."/>
            <person name="Okuno S."/>
            <person name="Watanabe T.K."/>
            <person name="Oga K."/>
            <person name="Tsuji A."/>
            <person name="Hishigaki H."/>
            <person name="Suto T."/>
            <person name="Nakagawa K."/>
            <person name="Nakahara Y."/>
            <person name="Higashi K."/>
        </authorList>
    </citation>
    <scope>NUCLEOTIDE SEQUENCE [MRNA]</scope>
    <source>
        <tissue>Skeletal muscle</tissue>
    </source>
</reference>
<reference key="2">
    <citation type="journal article" date="1999" name="Endocr. J.">
        <title>cDNA cloning and chromosomal mapping of rat Smad2 and Smad4 and their expression in cultured rat articular chondrocytes.</title>
        <authorList>
            <person name="Osaki M."/>
            <person name="Tsukazaki T."/>
            <person name="Ono N."/>
            <person name="Yonekura A."/>
            <person name="Hirota Y."/>
            <person name="Miyazaki Y."/>
            <person name="Shindo H."/>
            <person name="Sonta S."/>
            <person name="Yamashita S."/>
        </authorList>
    </citation>
    <scope>NUCLEOTIDE SEQUENCE [MRNA]</scope>
</reference>
<reference key="3">
    <citation type="journal article" date="2006" name="Oncogene">
        <title>Cited2 modulates TGF-beta-mediated upregulation of MMP9.</title>
        <authorList>
            <person name="Chou Y.T."/>
            <person name="Wang H."/>
            <person name="Chen Y."/>
            <person name="Danielpour D."/>
            <person name="Yang Y.C."/>
        </authorList>
    </citation>
    <scope>INTERACTION WITH CITED2</scope>
</reference>
<protein>
    <recommendedName>
        <fullName>Mothers against decapentaplegic homolog 4</fullName>
        <shortName>MAD homolog 4</shortName>
        <shortName>Mothers against DPP homolog 4</shortName>
    </recommendedName>
    <alternativeName>
        <fullName>SMAD family member 4</fullName>
        <shortName>SMAD 4</shortName>
        <shortName>Smad4</shortName>
    </alternativeName>
</protein>
<name>SMAD4_RAT</name>
<comment type="function">
    <text evidence="1">Common SMAD (co-SMAD) is the coactivator and mediator of signal transduction by TGF-beta (transforming growth factor). Component of the heterotrimeric SMAD2/SMAD3-SMAD4 complex that forms in the nucleus and is required for the TGF-mediated signaling. Promotes binding of the SMAD2/SMAD4/FAST-1 complex to DNA and provides an activation function required for SMAD1 or SMAD2 to stimulate transcription. Component of the multimeric SMAD3/SMAD4/JUN/FOS complex which forms at the AP1 promoter site; required for synergistic transcriptional activity in response to TGF-beta. Acts synergistically with SMAD1 and YY1 in bone morphogenetic protein (BMP)-mediated cardiac-specific gene expression. Binds to SMAD binding elements (SBEs) (5'-GTCT/AGAC-3') within BMP response element (BMPRE) of cardiac activating regions. May act as a tumor suppressor. Positively regulates PDPK1 kinase activity by stimulating its dissociation from the 14-3-3 protein YWHAQ which acts as a negative regulator. In muscle physiology, plays a central role in the balance between atrophy and hypertrophy. When recruited by MSTN, promotes atrophy response via phosphorylated SMAD2/4. MSTN decrease causes SMAD4 release and subsequent recruitment by the BMP pathway to promote hypertrophy via phosphorylated SMAD1/5/8 (By similarity).</text>
</comment>
<comment type="subunit">
    <text evidence="2 3 7">Monomer; in the absence of TGF-beta activation (By similarity). Heterotrimer; on TGF-beta activation (By similarity). Heterotrimer composed of two molecules of a C-terminally phosphorylated R-SMAD molecule, SMAD2 or SMAD3, and one molecule of SMAD4 to form the transcriptional active SMAD2/SMAD3-SMAD4 complex (By similarity). Found in a ternary complex composed of SMAD4, STK11/LKB1 and STK11IP. Found in a complex with SMAD1 and YY1. Identified in a complex that contains at least ZNF451, SMAD2, SMAD3 and SMAD4 (By similarity). Interacts with ATF2, COPS5, DACH1, MSG1, SKI, STK11/LKB1, STK11IP and TRIM33. Associates with ZNF423 or ZNF521 in response to BMP2 leading to activate transcription of BMP target genes. Interacts with USP9X. Interacts with RBPMS. Interacts with WWTR1 (via coiled-coil domain). Interacts with CITED1 and CITED2. Interacts with PDPK1 (via PH domain). Interacts with VPS39; this interaction affects heterodimer formation with SMAD3, but not with SMAD2, and leads to inhibition of SMAD3-dependent transcription activation. Interactions with VPS39 and SMAD2 may be mutually exclusive (By similarity). Interacts (via MH2 domain) with ZNF451 (via N-terminal zinc-finger domains) (By similarity). Interacts with ZC3H3 (By similarity). Interacts weakly with ZNF8 (By similarity). Interacts with NUP93 and IPO7; translocates SMAD4 to the nucleus through the NPC upon BMP7 stimulation resulting in activation of SMAD4 signaling (By similarity). Interacts with CREB3L1, the interaction takes place upon TGFB1 induction and SMAD4 acts as a CREB3L1 coactivator to induce the expression of genes involved in the assembly of collagen extracellular matrix (By similarity). Interacts with DLX1 (By similarity). Interacts with ZBTB7A; the interaction is direct and stimulated by TGFB1 (By similarity). Interacts with CREBBP; the recruitment of this transcriptional coactivator is negatively regulated by ZBTB7A (By similarity). Interacts with EP300; the interaction with this transcriptional coactivator is negatively regulated by ZBTB7A (By similarity). Interacts with HDAC1 (By similarity). Interacts (via MH2 domain) with ZMIZ1 (via SP-RING-type domain); in the TGF-beta signaling pathway increases the activity of the SMAD3/SMAD4 transcriptional complex (By similarity). Interacts (via N-terminus) with TSC22D1 (By similarity).</text>
</comment>
<comment type="subcellular location">
    <subcellularLocation>
        <location evidence="3">Cytoplasm</location>
    </subcellularLocation>
    <subcellularLocation>
        <location evidence="3">Nucleus</location>
    </subcellularLocation>
    <text evidence="3">In the cytoplasm in the absence of ligand. Migration to the nucleus when complexed with R-SMAD. PDPK1 prevents its nuclear translocation.</text>
</comment>
<comment type="domain">
    <text evidence="1">The MH1 domain is required for DNA binding.</text>
</comment>
<comment type="domain">
    <text evidence="1">The MH2 domain is required for both homomeric and heteromeric interactions and for transcriptional regulation. Sufficient for nuclear import (By similarity).</text>
</comment>
<comment type="PTM">
    <text evidence="1">Phosphorylated by PDPK1.</text>
</comment>
<comment type="PTM">
    <text evidence="1">Monoubiquitinated on Lys-519 by E3 ubiquitin-protein ligase TRIM33. Monoubiquitination hampers its ability to form a stable complex with activated SMAD2/3 resulting in inhibition of TGF-beta/BMP signaling cascade. Deubiquitination by USP9X restores its competence to mediate TGF-beta signaling (By similarity).</text>
</comment>
<comment type="similarity">
    <text evidence="8">Belongs to the dwarfin/SMAD family.</text>
</comment>
<organism>
    <name type="scientific">Rattus norvegicus</name>
    <name type="common">Rat</name>
    <dbReference type="NCBI Taxonomy" id="10116"/>
    <lineage>
        <taxon>Eukaryota</taxon>
        <taxon>Metazoa</taxon>
        <taxon>Chordata</taxon>
        <taxon>Craniata</taxon>
        <taxon>Vertebrata</taxon>
        <taxon>Euteleostomi</taxon>
        <taxon>Mammalia</taxon>
        <taxon>Eutheria</taxon>
        <taxon>Euarchontoglires</taxon>
        <taxon>Glires</taxon>
        <taxon>Rodentia</taxon>
        <taxon>Myomorpha</taxon>
        <taxon>Muroidea</taxon>
        <taxon>Muridae</taxon>
        <taxon>Murinae</taxon>
        <taxon>Rattus</taxon>
    </lineage>
</organism>